<organism>
    <name type="scientific">Alkaliphilus metalliredigens (strain QYMF)</name>
    <dbReference type="NCBI Taxonomy" id="293826"/>
    <lineage>
        <taxon>Bacteria</taxon>
        <taxon>Bacillati</taxon>
        <taxon>Bacillota</taxon>
        <taxon>Clostridia</taxon>
        <taxon>Peptostreptococcales</taxon>
        <taxon>Natronincolaceae</taxon>
        <taxon>Alkaliphilus</taxon>
    </lineage>
</organism>
<gene>
    <name evidence="1" type="primary">dut</name>
    <name type="ordered locus">Amet_0869</name>
</gene>
<keyword id="KW-0378">Hydrolase</keyword>
<keyword id="KW-0460">Magnesium</keyword>
<keyword id="KW-0479">Metal-binding</keyword>
<keyword id="KW-0546">Nucleotide metabolism</keyword>
<keyword id="KW-1185">Reference proteome</keyword>
<proteinExistence type="inferred from homology"/>
<sequence>MFNIKIKRINNLAKLPEYAHDGDAGMDLFSIEEKVIDPGGVALIHTGIKIELPEKTEAQIRPRSGLALKNSITVLNTPGTIDEGYRGEIGVILINHGKESFKVEKHMKVAQMVIKPVLKVKILEVDELSDTQRAEGGFGSTGVK</sequence>
<comment type="function">
    <text evidence="1">This enzyme is involved in nucleotide metabolism: it produces dUMP, the immediate precursor of thymidine nucleotides and it decreases the intracellular concentration of dUTP so that uracil cannot be incorporated into DNA.</text>
</comment>
<comment type="catalytic activity">
    <reaction evidence="1">
        <text>dUTP + H2O = dUMP + diphosphate + H(+)</text>
        <dbReference type="Rhea" id="RHEA:10248"/>
        <dbReference type="ChEBI" id="CHEBI:15377"/>
        <dbReference type="ChEBI" id="CHEBI:15378"/>
        <dbReference type="ChEBI" id="CHEBI:33019"/>
        <dbReference type="ChEBI" id="CHEBI:61555"/>
        <dbReference type="ChEBI" id="CHEBI:246422"/>
        <dbReference type="EC" id="3.6.1.23"/>
    </reaction>
</comment>
<comment type="cofactor">
    <cofactor evidence="1">
        <name>Mg(2+)</name>
        <dbReference type="ChEBI" id="CHEBI:18420"/>
    </cofactor>
</comment>
<comment type="pathway">
    <text evidence="1">Pyrimidine metabolism; dUMP biosynthesis; dUMP from dCTP (dUTP route): step 2/2.</text>
</comment>
<comment type="similarity">
    <text evidence="1">Belongs to the dUTPase family.</text>
</comment>
<dbReference type="EC" id="3.6.1.23" evidence="1"/>
<dbReference type="EMBL" id="CP000724">
    <property type="protein sequence ID" value="ABR47094.1"/>
    <property type="molecule type" value="Genomic_DNA"/>
</dbReference>
<dbReference type="RefSeq" id="WP_012062137.1">
    <property type="nucleotide sequence ID" value="NC_009633.1"/>
</dbReference>
<dbReference type="SMR" id="A6TLM6"/>
<dbReference type="STRING" id="293826.Amet_0869"/>
<dbReference type="KEGG" id="amt:Amet_0869"/>
<dbReference type="eggNOG" id="COG0756">
    <property type="taxonomic scope" value="Bacteria"/>
</dbReference>
<dbReference type="HOGENOM" id="CLU_068508_1_2_9"/>
<dbReference type="OrthoDB" id="9809956at2"/>
<dbReference type="UniPathway" id="UPA00610">
    <property type="reaction ID" value="UER00666"/>
</dbReference>
<dbReference type="Proteomes" id="UP000001572">
    <property type="component" value="Chromosome"/>
</dbReference>
<dbReference type="GO" id="GO:0004170">
    <property type="term" value="F:dUTP diphosphatase activity"/>
    <property type="evidence" value="ECO:0007669"/>
    <property type="project" value="UniProtKB-UniRule"/>
</dbReference>
<dbReference type="GO" id="GO:0000287">
    <property type="term" value="F:magnesium ion binding"/>
    <property type="evidence" value="ECO:0007669"/>
    <property type="project" value="UniProtKB-UniRule"/>
</dbReference>
<dbReference type="GO" id="GO:0006226">
    <property type="term" value="P:dUMP biosynthetic process"/>
    <property type="evidence" value="ECO:0007669"/>
    <property type="project" value="UniProtKB-UniRule"/>
</dbReference>
<dbReference type="GO" id="GO:0046081">
    <property type="term" value="P:dUTP catabolic process"/>
    <property type="evidence" value="ECO:0007669"/>
    <property type="project" value="InterPro"/>
</dbReference>
<dbReference type="CDD" id="cd07557">
    <property type="entry name" value="trimeric_dUTPase"/>
    <property type="match status" value="1"/>
</dbReference>
<dbReference type="FunFam" id="2.70.40.10:FF:000008">
    <property type="entry name" value="Deoxyuridine 5'-triphosphate nucleotidohydrolase"/>
    <property type="match status" value="1"/>
</dbReference>
<dbReference type="Gene3D" id="2.70.40.10">
    <property type="match status" value="1"/>
</dbReference>
<dbReference type="HAMAP" id="MF_00116">
    <property type="entry name" value="dUTPase_bact"/>
    <property type="match status" value="1"/>
</dbReference>
<dbReference type="InterPro" id="IPR008181">
    <property type="entry name" value="dUTPase"/>
</dbReference>
<dbReference type="InterPro" id="IPR029054">
    <property type="entry name" value="dUTPase-like"/>
</dbReference>
<dbReference type="InterPro" id="IPR036157">
    <property type="entry name" value="dUTPase-like_sf"/>
</dbReference>
<dbReference type="InterPro" id="IPR033704">
    <property type="entry name" value="dUTPase_trimeric"/>
</dbReference>
<dbReference type="NCBIfam" id="TIGR00576">
    <property type="entry name" value="dut"/>
    <property type="match status" value="1"/>
</dbReference>
<dbReference type="NCBIfam" id="NF001862">
    <property type="entry name" value="PRK00601.1"/>
    <property type="match status" value="1"/>
</dbReference>
<dbReference type="PANTHER" id="PTHR11241">
    <property type="entry name" value="DEOXYURIDINE 5'-TRIPHOSPHATE NUCLEOTIDOHYDROLASE"/>
    <property type="match status" value="1"/>
</dbReference>
<dbReference type="PANTHER" id="PTHR11241:SF0">
    <property type="entry name" value="DEOXYURIDINE 5'-TRIPHOSPHATE NUCLEOTIDOHYDROLASE"/>
    <property type="match status" value="1"/>
</dbReference>
<dbReference type="Pfam" id="PF00692">
    <property type="entry name" value="dUTPase"/>
    <property type="match status" value="1"/>
</dbReference>
<dbReference type="SUPFAM" id="SSF51283">
    <property type="entry name" value="dUTPase-like"/>
    <property type="match status" value="1"/>
</dbReference>
<feature type="chain" id="PRO_1000057764" description="Deoxyuridine 5'-triphosphate nucleotidohydrolase">
    <location>
        <begin position="1"/>
        <end position="144"/>
    </location>
</feature>
<feature type="binding site" evidence="1">
    <location>
        <begin position="63"/>
        <end position="65"/>
    </location>
    <ligand>
        <name>substrate</name>
    </ligand>
</feature>
<feature type="binding site" evidence="1">
    <location>
        <position position="76"/>
    </location>
    <ligand>
        <name>substrate</name>
    </ligand>
</feature>
<feature type="binding site" evidence="1">
    <location>
        <begin position="80"/>
        <end position="82"/>
    </location>
    <ligand>
        <name>substrate</name>
    </ligand>
</feature>
<reference key="1">
    <citation type="journal article" date="2016" name="Genome Announc.">
        <title>Complete genome sequence of Alkaliphilus metalliredigens strain QYMF, an alkaliphilic and metal-reducing bacterium isolated from borax-contaminated leachate ponds.</title>
        <authorList>
            <person name="Hwang C."/>
            <person name="Copeland A."/>
            <person name="Lucas S."/>
            <person name="Lapidus A."/>
            <person name="Barry K."/>
            <person name="Detter J.C."/>
            <person name="Glavina Del Rio T."/>
            <person name="Hammon N."/>
            <person name="Israni S."/>
            <person name="Dalin E."/>
            <person name="Tice H."/>
            <person name="Pitluck S."/>
            <person name="Chertkov O."/>
            <person name="Brettin T."/>
            <person name="Bruce D."/>
            <person name="Han C."/>
            <person name="Schmutz J."/>
            <person name="Larimer F."/>
            <person name="Land M.L."/>
            <person name="Hauser L."/>
            <person name="Kyrpides N."/>
            <person name="Mikhailova N."/>
            <person name="Ye Q."/>
            <person name="Zhou J."/>
            <person name="Richardson P."/>
            <person name="Fields M.W."/>
        </authorList>
    </citation>
    <scope>NUCLEOTIDE SEQUENCE [LARGE SCALE GENOMIC DNA]</scope>
    <source>
        <strain>QYMF</strain>
    </source>
</reference>
<protein>
    <recommendedName>
        <fullName evidence="1">Deoxyuridine 5'-triphosphate nucleotidohydrolase</fullName>
        <shortName evidence="1">dUTPase</shortName>
        <ecNumber evidence="1">3.6.1.23</ecNumber>
    </recommendedName>
    <alternativeName>
        <fullName evidence="1">dUTP pyrophosphatase</fullName>
    </alternativeName>
</protein>
<name>DUT_ALKMQ</name>
<accession>A6TLM6</accession>
<evidence type="ECO:0000255" key="1">
    <source>
        <dbReference type="HAMAP-Rule" id="MF_00116"/>
    </source>
</evidence>